<sequence>MKLMCVLIVSVLVLTACQLSTADDTRDKQKDRLVRLFRKKRDSSDSGLLPRTCVMFGSMCDKEEHSICCYECDYKKGICV</sequence>
<protein>
    <recommendedName>
        <fullName>Conotoxin Bu3</fullName>
    </recommendedName>
</protein>
<feature type="signal peptide" evidence="2">
    <location>
        <begin position="1"/>
        <end position="22"/>
    </location>
</feature>
<feature type="propeptide" id="PRO_0000409939" evidence="1">
    <location>
        <begin position="23"/>
        <end position="51"/>
    </location>
</feature>
<feature type="peptide" id="PRO_0000409940" description="Conotoxin Bu3">
    <location>
        <begin position="52"/>
        <end position="80"/>
    </location>
</feature>
<feature type="disulfide bond" evidence="1">
    <location>
        <begin position="53"/>
        <end position="69"/>
    </location>
</feature>
<feature type="disulfide bond" evidence="1">
    <location>
        <begin position="60"/>
        <end position="72"/>
    </location>
</feature>
<feature type="disulfide bond" evidence="1">
    <location>
        <begin position="68"/>
        <end position="79"/>
    </location>
</feature>
<comment type="subcellular location">
    <subcellularLocation>
        <location evidence="1">Secreted</location>
    </subcellularLocation>
</comment>
<comment type="tissue specificity">
    <text>Expressed by the venom duct.</text>
</comment>
<comment type="domain">
    <text>The presence of a 'disulfide through disulfide knot' structurally defines this protein as a knottin.</text>
</comment>
<comment type="domain">
    <text>The cysteine framework is VI/VII (C-C-CC-C-C).</text>
</comment>
<comment type="similarity">
    <text evidence="3">Belongs to the conotoxin O1 superfamily.</text>
</comment>
<dbReference type="SMR" id="P0CY62"/>
<dbReference type="GO" id="GO:0005576">
    <property type="term" value="C:extracellular region"/>
    <property type="evidence" value="ECO:0007669"/>
    <property type="project" value="UniProtKB-SubCell"/>
</dbReference>
<dbReference type="GO" id="GO:0008200">
    <property type="term" value="F:ion channel inhibitor activity"/>
    <property type="evidence" value="ECO:0007669"/>
    <property type="project" value="InterPro"/>
</dbReference>
<dbReference type="GO" id="GO:0090729">
    <property type="term" value="F:toxin activity"/>
    <property type="evidence" value="ECO:0007669"/>
    <property type="project" value="UniProtKB-KW"/>
</dbReference>
<dbReference type="InterPro" id="IPR004214">
    <property type="entry name" value="Conotoxin"/>
</dbReference>
<dbReference type="Pfam" id="PF02950">
    <property type="entry name" value="Conotoxin"/>
    <property type="match status" value="1"/>
</dbReference>
<reference key="1">
    <citation type="journal article" date="2011" name="BMC Genomics">
        <title>Characterization of the Conus bullatus genome and its venom-duct transcriptome.</title>
        <authorList>
            <person name="Hu H."/>
            <person name="Bandyopadhyay P.K."/>
            <person name="Olivera B.M."/>
            <person name="Yandell M."/>
        </authorList>
    </citation>
    <scope>NUCLEOTIDE SEQUENCE [MRNA]</scope>
    <source>
        <tissue>Venom duct</tissue>
    </source>
</reference>
<name>O163_CONBU</name>
<evidence type="ECO:0000250" key="1"/>
<evidence type="ECO:0000255" key="2"/>
<evidence type="ECO:0000305" key="3"/>
<proteinExistence type="evidence at transcript level"/>
<accession>P0CY62</accession>
<keyword id="KW-1015">Disulfide bond</keyword>
<keyword id="KW-0872">Ion channel impairing toxin</keyword>
<keyword id="KW-0960">Knottin</keyword>
<keyword id="KW-0528">Neurotoxin</keyword>
<keyword id="KW-0964">Secreted</keyword>
<keyword id="KW-0732">Signal</keyword>
<keyword id="KW-0800">Toxin</keyword>
<organism>
    <name type="scientific">Conus bullatus</name>
    <name type="common">Bubble cone</name>
    <dbReference type="NCBI Taxonomy" id="89438"/>
    <lineage>
        <taxon>Eukaryota</taxon>
        <taxon>Metazoa</taxon>
        <taxon>Spiralia</taxon>
        <taxon>Lophotrochozoa</taxon>
        <taxon>Mollusca</taxon>
        <taxon>Gastropoda</taxon>
        <taxon>Caenogastropoda</taxon>
        <taxon>Neogastropoda</taxon>
        <taxon>Conoidea</taxon>
        <taxon>Conidae</taxon>
        <taxon>Conus</taxon>
        <taxon>Textilia</taxon>
    </lineage>
</organism>